<sequence length="622" mass="70080">MNRYTTMKQLGDGTYGSVLMGKSNESGELVAIKRMKRKFYSWDECMNLREVKSLKKLNHANVIKLKEVIRENDHLYFVFEYMKENLYQLMKDRNKLFPESVIRNIMYQILQGLAFIHKHGFFHRDMKPENLLCMGPELVKIADFGLARELRSQPPYTDYVSTRWYRAPEVLLRSSVYSSPIDVWAVGSIMAELYTFRPLFPGTSEVDEIFKICQVLGTPKKSDWPEGYQLASSMNFRFPQCIPINLKTLIPNASSEAIQLMTEMLNWDPKKRPTASQALKHPYFQVGQVLGSSAHHLDTKQTLHKQLQPLEPKPSSSERDPKPLPNILDQPAGQPQPKQGHQPLQTIQPPQNTVTHPPPKQQGHQKPPQTMFPSIIKTIPVNSVSTLGHKGARRRWGQTVFKSGDSCDDIEDDLGASHSKKPSMEACKEKKKESPFRFPDSGLPVSNHFKGENRNLHASVSLKSDPNLSTASTAKQYYLKQSRYLPGVNPKNVSLVAGGKDINSHSWNNQLFPKSLGSMGADLSFKRSNAAGNLGSYTTYNQTGYMPSFLKKEVGSAGQRIQLAPLGASASDYTWSTKTGRGQFSGRTYNPTAKNLNIVNRTQPVPSVHGRTDWVAKYGGHR</sequence>
<evidence type="ECO:0000250" key="1"/>
<evidence type="ECO:0000250" key="2">
    <source>
        <dbReference type="UniProtKB" id="P20794"/>
    </source>
</evidence>
<evidence type="ECO:0000255" key="3">
    <source>
        <dbReference type="PROSITE-ProRule" id="PRU00159"/>
    </source>
</evidence>
<evidence type="ECO:0000255" key="4">
    <source>
        <dbReference type="PROSITE-ProRule" id="PRU10027"/>
    </source>
</evidence>
<evidence type="ECO:0000256" key="5">
    <source>
        <dbReference type="SAM" id="MobiDB-lite"/>
    </source>
</evidence>
<evidence type="ECO:0000269" key="6">
    <source>
    </source>
</evidence>
<evidence type="ECO:0000269" key="7">
    <source>
    </source>
</evidence>
<evidence type="ECO:0000269" key="8">
    <source>
    </source>
</evidence>
<evidence type="ECO:0000303" key="9">
    <source>
    </source>
</evidence>
<evidence type="ECO:0000305" key="10"/>
<comment type="function">
    <text evidence="1 8">Essential for the regulation of ciliary length and required for the long-term survival of photoreceptors. Could have an important function in sensory cells and in spermatogenesis. May participate in signaling pathways used in visual and olfactory sensory transduction. Phosphorylates FZR1 in a cell cycle-dependent manner. Plays a role in the transcriptional coactivation of AR (By similarity).</text>
</comment>
<comment type="catalytic activity">
    <reaction evidence="2">
        <text>L-seryl-[protein] + ATP = O-phospho-L-seryl-[protein] + ADP + H(+)</text>
        <dbReference type="Rhea" id="RHEA:17989"/>
        <dbReference type="Rhea" id="RHEA-COMP:9863"/>
        <dbReference type="Rhea" id="RHEA-COMP:11604"/>
        <dbReference type="ChEBI" id="CHEBI:15378"/>
        <dbReference type="ChEBI" id="CHEBI:29999"/>
        <dbReference type="ChEBI" id="CHEBI:30616"/>
        <dbReference type="ChEBI" id="CHEBI:83421"/>
        <dbReference type="ChEBI" id="CHEBI:456216"/>
        <dbReference type="EC" id="2.7.11.1"/>
    </reaction>
</comment>
<comment type="catalytic activity">
    <reaction evidence="2">
        <text>L-threonyl-[protein] + ATP = O-phospho-L-threonyl-[protein] + ADP + H(+)</text>
        <dbReference type="Rhea" id="RHEA:46608"/>
        <dbReference type="Rhea" id="RHEA-COMP:11060"/>
        <dbReference type="Rhea" id="RHEA-COMP:11605"/>
        <dbReference type="ChEBI" id="CHEBI:15378"/>
        <dbReference type="ChEBI" id="CHEBI:30013"/>
        <dbReference type="ChEBI" id="CHEBI:30616"/>
        <dbReference type="ChEBI" id="CHEBI:61977"/>
        <dbReference type="ChEBI" id="CHEBI:456216"/>
        <dbReference type="EC" id="2.7.11.1"/>
    </reaction>
</comment>
<comment type="cofactor">
    <cofactor evidence="2">
        <name>Mg(2+)</name>
        <dbReference type="ChEBI" id="CHEBI:18420"/>
    </cofactor>
</comment>
<comment type="subunit">
    <text evidence="1 8">Interacts with AR and CDK20. Found in a complex containing MAK, AR and NCOA3. Interacts with FZR1 (via WD repeats) (By similarity). Interacts with RP1.</text>
</comment>
<comment type="subcellular location">
    <subcellularLocation>
        <location evidence="1">Nucleus</location>
    </subcellularLocation>
    <subcellularLocation>
        <location evidence="1">Cytoplasm</location>
        <location evidence="1">Cytoskeleton</location>
        <location evidence="1">Microtubule organizing center</location>
        <location evidence="1">Centrosome</location>
    </subcellularLocation>
    <subcellularLocation>
        <location evidence="1">Cytoplasm</location>
        <location evidence="1">Cytoskeleton</location>
        <location evidence="1">Spindle</location>
    </subcellularLocation>
    <subcellularLocation>
        <location evidence="1">Midbody</location>
    </subcellularLocation>
    <subcellularLocation>
        <location evidence="8">Cell projection</location>
        <location evidence="8">Cilium</location>
        <location evidence="8">Photoreceptor outer segment</location>
    </subcellularLocation>
    <subcellularLocation>
        <location evidence="1">Photoreceptor inner segment</location>
    </subcellularLocation>
    <text>Localizes in both the connecting cilia and the outer segment axonemes.</text>
</comment>
<comment type="alternative products">
    <event type="alternative splicing"/>
    <isoform>
        <id>Q04859-1</id>
        <name>1</name>
        <sequence type="displayed"/>
    </isoform>
    <isoform>
        <id>Q04859-2</id>
        <name>2</name>
        <sequence type="described" ref="VSP_042474"/>
    </isoform>
    <isoform>
        <id>Q04859-3</id>
        <name>3</name>
        <sequence type="described" ref="VSP_042472 VSP_042473"/>
    </isoform>
</comment>
<comment type="tissue specificity">
    <text evidence="8">In pre- and postmeiotic male germ cells in testis. In photoreceptor cells of the retina and in the olfactory receptors, and in certain epithelia of the respiratory tract and choroid plexus (brain).</text>
</comment>
<comment type="developmental stage">
    <text evidence="7">On day 14 or 17 of embryonic development. Expression is observed in germ cells at the stages of late pachytene spermatocytes through to early round spermatids.</text>
</comment>
<comment type="PTM">
    <text evidence="1">Autophosphorylated. Phosphorylated on serine and threonine residues (By similarity).</text>
</comment>
<comment type="disruption phenotype">
    <text evidence="6">Mice are mostly fertile, develop normally, and exhibit no gross abnormalities and spermatogenesis is intact. However, both sperm motility and litter size is reduced.</text>
</comment>
<comment type="similarity">
    <text evidence="10">Belongs to the protein kinase superfamily. CMGC Ser/Thr protein kinase family. CDC2/CDKX subfamily.</text>
</comment>
<keyword id="KW-0025">Alternative splicing</keyword>
<keyword id="KW-0067">ATP-binding</keyword>
<keyword id="KW-0966">Cell projection</keyword>
<keyword id="KW-0969">Cilium</keyword>
<keyword id="KW-0963">Cytoplasm</keyword>
<keyword id="KW-0206">Cytoskeleton</keyword>
<keyword id="KW-0418">Kinase</keyword>
<keyword id="KW-0460">Magnesium</keyword>
<keyword id="KW-0479">Metal-binding</keyword>
<keyword id="KW-0547">Nucleotide-binding</keyword>
<keyword id="KW-0539">Nucleus</keyword>
<keyword id="KW-0597">Phosphoprotein</keyword>
<keyword id="KW-1185">Reference proteome</keyword>
<keyword id="KW-0723">Serine/threonine-protein kinase</keyword>
<keyword id="KW-0804">Transcription</keyword>
<keyword id="KW-0805">Transcription regulation</keyword>
<keyword id="KW-0808">Transferase</keyword>
<protein>
    <recommendedName>
        <fullName>Serine/threonine-protein kinase MAK</fullName>
        <ecNumber evidence="2">2.7.11.1</ecNumber>
    </recommendedName>
    <alternativeName>
        <fullName>Male germ cell-associated kinase</fullName>
    </alternativeName>
    <alternativeName>
        <fullName>Protein kinase RCK</fullName>
    </alternativeName>
</protein>
<proteinExistence type="evidence at protein level"/>
<accession>Q04859</accession>
<accession>E9Q4B2</accession>
<accession>E9QAU5</accession>
<accession>E9QKR3</accession>
<accession>Q8CDL5</accession>
<dbReference type="EC" id="2.7.11.1" evidence="2"/>
<dbReference type="EMBL" id="X66983">
    <property type="protein sequence ID" value="CAA47392.1"/>
    <property type="molecule type" value="mRNA"/>
</dbReference>
<dbReference type="EMBL" id="AK029894">
    <property type="protein sequence ID" value="BAC26662.1"/>
    <property type="molecule type" value="mRNA"/>
</dbReference>
<dbReference type="EMBL" id="AC133496">
    <property type="status" value="NOT_ANNOTATED_CDS"/>
    <property type="molecule type" value="Genomic_DNA"/>
</dbReference>
<dbReference type="CCDS" id="CCDS26471.1">
    <molecule id="Q04859-1"/>
</dbReference>
<dbReference type="CCDS" id="CCDS49244.1">
    <molecule id="Q04859-3"/>
</dbReference>
<dbReference type="CCDS" id="CCDS49245.1">
    <molecule id="Q04859-2"/>
</dbReference>
<dbReference type="PIR" id="I48733">
    <property type="entry name" value="I48733"/>
</dbReference>
<dbReference type="RefSeq" id="NP_001139274.1">
    <molecule id="Q04859-3"/>
    <property type="nucleotide sequence ID" value="NM_001145802.1"/>
</dbReference>
<dbReference type="RefSeq" id="NP_001139275.1">
    <molecule id="Q04859-2"/>
    <property type="nucleotide sequence ID" value="NM_001145803.1"/>
</dbReference>
<dbReference type="RefSeq" id="NP_032573.2">
    <molecule id="Q04859-1"/>
    <property type="nucleotide sequence ID" value="NM_008547.2"/>
</dbReference>
<dbReference type="RefSeq" id="XP_006516934.1">
    <molecule id="Q04859-1"/>
    <property type="nucleotide sequence ID" value="XM_006516871.3"/>
</dbReference>
<dbReference type="RefSeq" id="XP_036013776.1">
    <molecule id="Q04859-2"/>
    <property type="nucleotide sequence ID" value="XM_036157883.1"/>
</dbReference>
<dbReference type="RefSeq" id="XP_036013777.1">
    <molecule id="Q04859-1"/>
    <property type="nucleotide sequence ID" value="XM_036157884.1"/>
</dbReference>
<dbReference type="SMR" id="Q04859"/>
<dbReference type="DIP" id="DIP-59494N"/>
<dbReference type="FunCoup" id="Q04859">
    <property type="interactions" value="493"/>
</dbReference>
<dbReference type="IntAct" id="Q04859">
    <property type="interactions" value="1"/>
</dbReference>
<dbReference type="STRING" id="10090.ENSMUSP00000152946"/>
<dbReference type="ChEMBL" id="CHEMBL2176784"/>
<dbReference type="iPTMnet" id="Q04859"/>
<dbReference type="PhosphoSitePlus" id="Q04859"/>
<dbReference type="jPOST" id="Q04859"/>
<dbReference type="PaxDb" id="10090-ENSMUSP00000129615"/>
<dbReference type="ProteomicsDB" id="292163">
    <molecule id="Q04859-1"/>
</dbReference>
<dbReference type="ProteomicsDB" id="292164">
    <molecule id="Q04859-2"/>
</dbReference>
<dbReference type="ProteomicsDB" id="292165">
    <molecule id="Q04859-3"/>
</dbReference>
<dbReference type="Antibodypedia" id="24855">
    <property type="antibodies" value="444 antibodies from 30 providers"/>
</dbReference>
<dbReference type="DNASU" id="17152"/>
<dbReference type="Ensembl" id="ENSMUST00000021792.5">
    <molecule id="Q04859-1"/>
    <property type="protein sequence ID" value="ENSMUSP00000021792.5"/>
    <property type="gene ID" value="ENSMUSG00000021363.15"/>
</dbReference>
<dbReference type="Ensembl" id="ENSMUST00000070193.14">
    <molecule id="Q04859-3"/>
    <property type="protein sequence ID" value="ENSMUSP00000064750.7"/>
    <property type="gene ID" value="ENSMUSG00000021363.15"/>
</dbReference>
<dbReference type="Ensembl" id="ENSMUST00000165087.8">
    <molecule id="Q04859-2"/>
    <property type="protein sequence ID" value="ENSMUSP00000129615.2"/>
    <property type="gene ID" value="ENSMUSG00000021363.15"/>
</dbReference>
<dbReference type="Ensembl" id="ENSMUST00000225084.2">
    <molecule id="Q04859-2"/>
    <property type="protein sequence ID" value="ENSMUSP00000152946.2"/>
    <property type="gene ID" value="ENSMUSG00000021363.15"/>
</dbReference>
<dbReference type="GeneID" id="17152"/>
<dbReference type="KEGG" id="mmu:17152"/>
<dbReference type="UCSC" id="uc007qev.2">
    <molecule id="Q04859-1"/>
    <property type="organism name" value="mouse"/>
</dbReference>
<dbReference type="UCSC" id="uc007qew.2">
    <molecule id="Q04859-2"/>
    <property type="organism name" value="mouse"/>
</dbReference>
<dbReference type="UCSC" id="uc007qex.2">
    <molecule id="Q04859-3"/>
    <property type="organism name" value="mouse"/>
</dbReference>
<dbReference type="AGR" id="MGI:96913"/>
<dbReference type="CTD" id="4117"/>
<dbReference type="MGI" id="MGI:96913">
    <property type="gene designation" value="Mak"/>
</dbReference>
<dbReference type="VEuPathDB" id="HostDB:ENSMUSG00000021363"/>
<dbReference type="eggNOG" id="KOG0661">
    <property type="taxonomic scope" value="Eukaryota"/>
</dbReference>
<dbReference type="GeneTree" id="ENSGT00940000156581"/>
<dbReference type="HOGENOM" id="CLU_000288_181_25_1"/>
<dbReference type="InParanoid" id="Q04859"/>
<dbReference type="OMA" id="MNILTHA"/>
<dbReference type="TreeFam" id="TF328769"/>
<dbReference type="BRENDA" id="2.7.11.22">
    <property type="organism ID" value="3474"/>
</dbReference>
<dbReference type="BioGRID-ORCS" id="17152">
    <property type="hits" value="1 hit in 79 CRISPR screens"/>
</dbReference>
<dbReference type="ChiTaRS" id="Ddx6">
    <property type="organism name" value="mouse"/>
</dbReference>
<dbReference type="PRO" id="PR:Q04859"/>
<dbReference type="Proteomes" id="UP000000589">
    <property type="component" value="Chromosome 13"/>
</dbReference>
<dbReference type="RNAct" id="Q04859">
    <property type="molecule type" value="protein"/>
</dbReference>
<dbReference type="Bgee" id="ENSMUSG00000021363">
    <property type="expression patterns" value="Expressed in retinal neural layer and 73 other cell types or tissues"/>
</dbReference>
<dbReference type="ExpressionAtlas" id="Q04859">
    <property type="expression patterns" value="baseline and differential"/>
</dbReference>
<dbReference type="GO" id="GO:0005930">
    <property type="term" value="C:axoneme"/>
    <property type="evidence" value="ECO:0000314"/>
    <property type="project" value="MGI"/>
</dbReference>
<dbReference type="GO" id="GO:0005813">
    <property type="term" value="C:centrosome"/>
    <property type="evidence" value="ECO:0000250"/>
    <property type="project" value="UniProtKB"/>
</dbReference>
<dbReference type="GO" id="GO:0036064">
    <property type="term" value="C:ciliary basal body"/>
    <property type="evidence" value="ECO:0007669"/>
    <property type="project" value="Ensembl"/>
</dbReference>
<dbReference type="GO" id="GO:0097542">
    <property type="term" value="C:ciliary tip"/>
    <property type="evidence" value="ECO:0000314"/>
    <property type="project" value="MGI"/>
</dbReference>
<dbReference type="GO" id="GO:0005829">
    <property type="term" value="C:cytosol"/>
    <property type="evidence" value="ECO:0007669"/>
    <property type="project" value="Ensembl"/>
</dbReference>
<dbReference type="GO" id="GO:0030496">
    <property type="term" value="C:midbody"/>
    <property type="evidence" value="ECO:0000250"/>
    <property type="project" value="UniProtKB"/>
</dbReference>
<dbReference type="GO" id="GO:0072686">
    <property type="term" value="C:mitotic spindle"/>
    <property type="evidence" value="ECO:0000250"/>
    <property type="project" value="UniProtKB"/>
</dbReference>
<dbReference type="GO" id="GO:0031514">
    <property type="term" value="C:motile cilium"/>
    <property type="evidence" value="ECO:0000314"/>
    <property type="project" value="MGI"/>
</dbReference>
<dbReference type="GO" id="GO:0005730">
    <property type="term" value="C:nucleolus"/>
    <property type="evidence" value="ECO:0007669"/>
    <property type="project" value="Ensembl"/>
</dbReference>
<dbReference type="GO" id="GO:0005654">
    <property type="term" value="C:nucleoplasm"/>
    <property type="evidence" value="ECO:0007669"/>
    <property type="project" value="Ensembl"/>
</dbReference>
<dbReference type="GO" id="GO:0005634">
    <property type="term" value="C:nucleus"/>
    <property type="evidence" value="ECO:0000314"/>
    <property type="project" value="MGI"/>
</dbReference>
<dbReference type="GO" id="GO:0032391">
    <property type="term" value="C:photoreceptor connecting cilium"/>
    <property type="evidence" value="ECO:0000314"/>
    <property type="project" value="MGI"/>
</dbReference>
<dbReference type="GO" id="GO:0001917">
    <property type="term" value="C:photoreceptor inner segment"/>
    <property type="evidence" value="ECO:0000250"/>
    <property type="project" value="UniProtKB"/>
</dbReference>
<dbReference type="GO" id="GO:0001750">
    <property type="term" value="C:photoreceptor outer segment"/>
    <property type="evidence" value="ECO:0000314"/>
    <property type="project" value="UniProtKB"/>
</dbReference>
<dbReference type="GO" id="GO:0005886">
    <property type="term" value="C:plasma membrane"/>
    <property type="evidence" value="ECO:0007669"/>
    <property type="project" value="Ensembl"/>
</dbReference>
<dbReference type="GO" id="GO:0005524">
    <property type="term" value="F:ATP binding"/>
    <property type="evidence" value="ECO:0007669"/>
    <property type="project" value="UniProtKB-KW"/>
</dbReference>
<dbReference type="GO" id="GO:0046872">
    <property type="term" value="F:metal ion binding"/>
    <property type="evidence" value="ECO:0007669"/>
    <property type="project" value="UniProtKB-KW"/>
</dbReference>
<dbReference type="GO" id="GO:0004672">
    <property type="term" value="F:protein kinase activity"/>
    <property type="evidence" value="ECO:0000314"/>
    <property type="project" value="MGI"/>
</dbReference>
<dbReference type="GO" id="GO:0106310">
    <property type="term" value="F:protein serine kinase activity"/>
    <property type="evidence" value="ECO:0007669"/>
    <property type="project" value="RHEA"/>
</dbReference>
<dbReference type="GO" id="GO:0004674">
    <property type="term" value="F:protein serine/threonine kinase activity"/>
    <property type="evidence" value="ECO:0007669"/>
    <property type="project" value="UniProtKB-KW"/>
</dbReference>
<dbReference type="GO" id="GO:0003713">
    <property type="term" value="F:transcription coactivator activity"/>
    <property type="evidence" value="ECO:0000250"/>
    <property type="project" value="UniProtKB"/>
</dbReference>
<dbReference type="GO" id="GO:1902856">
    <property type="term" value="P:negative regulation of non-motile cilium assembly"/>
    <property type="evidence" value="ECO:0000314"/>
    <property type="project" value="MGI"/>
</dbReference>
<dbReference type="GO" id="GO:1905515">
    <property type="term" value="P:non-motile cilium assembly"/>
    <property type="evidence" value="ECO:0000314"/>
    <property type="project" value="MGI"/>
</dbReference>
<dbReference type="GO" id="GO:0045494">
    <property type="term" value="P:photoreceptor cell maintenance"/>
    <property type="evidence" value="ECO:0000315"/>
    <property type="project" value="UniProtKB"/>
</dbReference>
<dbReference type="GO" id="GO:0046777">
    <property type="term" value="P:protein autophosphorylation"/>
    <property type="evidence" value="ECO:0000250"/>
    <property type="project" value="UniProtKB"/>
</dbReference>
<dbReference type="GO" id="GO:0006468">
    <property type="term" value="P:protein phosphorylation"/>
    <property type="evidence" value="ECO:0000250"/>
    <property type="project" value="UniProtKB"/>
</dbReference>
<dbReference type="CDD" id="cd07830">
    <property type="entry name" value="STKc_MAK_like"/>
    <property type="match status" value="1"/>
</dbReference>
<dbReference type="FunFam" id="1.10.510.10:FF:000104">
    <property type="entry name" value="serine/threonine-protein kinase MAK isoform X1"/>
    <property type="match status" value="1"/>
</dbReference>
<dbReference type="FunFam" id="3.30.200.20:FF:000071">
    <property type="entry name" value="serine/threonine-protein kinase MAK isoform X1"/>
    <property type="match status" value="1"/>
</dbReference>
<dbReference type="Gene3D" id="3.30.200.20">
    <property type="entry name" value="Phosphorylase Kinase, domain 1"/>
    <property type="match status" value="1"/>
</dbReference>
<dbReference type="Gene3D" id="1.10.510.10">
    <property type="entry name" value="Transferase(Phosphotransferase) domain 1"/>
    <property type="match status" value="1"/>
</dbReference>
<dbReference type="InterPro" id="IPR011009">
    <property type="entry name" value="Kinase-like_dom_sf"/>
</dbReference>
<dbReference type="InterPro" id="IPR050117">
    <property type="entry name" value="MAP_kinase"/>
</dbReference>
<dbReference type="InterPro" id="IPR000719">
    <property type="entry name" value="Prot_kinase_dom"/>
</dbReference>
<dbReference type="InterPro" id="IPR017441">
    <property type="entry name" value="Protein_kinase_ATP_BS"/>
</dbReference>
<dbReference type="InterPro" id="IPR008271">
    <property type="entry name" value="Ser/Thr_kinase_AS"/>
</dbReference>
<dbReference type="PANTHER" id="PTHR24055">
    <property type="entry name" value="MITOGEN-ACTIVATED PROTEIN KINASE"/>
    <property type="match status" value="1"/>
</dbReference>
<dbReference type="Pfam" id="PF00069">
    <property type="entry name" value="Pkinase"/>
    <property type="match status" value="1"/>
</dbReference>
<dbReference type="SMART" id="SM00220">
    <property type="entry name" value="S_TKc"/>
    <property type="match status" value="1"/>
</dbReference>
<dbReference type="SUPFAM" id="SSF56112">
    <property type="entry name" value="Protein kinase-like (PK-like)"/>
    <property type="match status" value="1"/>
</dbReference>
<dbReference type="PROSITE" id="PS00107">
    <property type="entry name" value="PROTEIN_KINASE_ATP"/>
    <property type="match status" value="1"/>
</dbReference>
<dbReference type="PROSITE" id="PS50011">
    <property type="entry name" value="PROTEIN_KINASE_DOM"/>
    <property type="match status" value="1"/>
</dbReference>
<dbReference type="PROSITE" id="PS00108">
    <property type="entry name" value="PROTEIN_KINASE_ST"/>
    <property type="match status" value="1"/>
</dbReference>
<organism>
    <name type="scientific">Mus musculus</name>
    <name type="common">Mouse</name>
    <dbReference type="NCBI Taxonomy" id="10090"/>
    <lineage>
        <taxon>Eukaryota</taxon>
        <taxon>Metazoa</taxon>
        <taxon>Chordata</taxon>
        <taxon>Craniata</taxon>
        <taxon>Vertebrata</taxon>
        <taxon>Euteleostomi</taxon>
        <taxon>Mammalia</taxon>
        <taxon>Eutheria</taxon>
        <taxon>Euarchontoglires</taxon>
        <taxon>Glires</taxon>
        <taxon>Rodentia</taxon>
        <taxon>Myomorpha</taxon>
        <taxon>Muroidea</taxon>
        <taxon>Muridae</taxon>
        <taxon>Murinae</taxon>
        <taxon>Mus</taxon>
        <taxon>Mus</taxon>
    </lineage>
</organism>
<reference key="1">
    <citation type="journal article" date="1993" name="Differentiation">
        <title>Characterization and expression analysis of the murine rck gene: a protein kinase with a potential function in sensory cells.</title>
        <authorList>
            <person name="Bladt F."/>
            <person name="Birchmeier C."/>
        </authorList>
    </citation>
    <scope>NUCLEOTIDE SEQUENCE [MRNA] (ISOFORM 1)</scope>
</reference>
<reference key="2">
    <citation type="journal article" date="2005" name="Science">
        <title>The transcriptional landscape of the mammalian genome.</title>
        <authorList>
            <person name="Carninci P."/>
            <person name="Kasukawa T."/>
            <person name="Katayama S."/>
            <person name="Gough J."/>
            <person name="Frith M.C."/>
            <person name="Maeda N."/>
            <person name="Oyama R."/>
            <person name="Ravasi T."/>
            <person name="Lenhard B."/>
            <person name="Wells C."/>
            <person name="Kodzius R."/>
            <person name="Shimokawa K."/>
            <person name="Bajic V.B."/>
            <person name="Brenner S.E."/>
            <person name="Batalov S."/>
            <person name="Forrest A.R."/>
            <person name="Zavolan M."/>
            <person name="Davis M.J."/>
            <person name="Wilming L.G."/>
            <person name="Aidinis V."/>
            <person name="Allen J.E."/>
            <person name="Ambesi-Impiombato A."/>
            <person name="Apweiler R."/>
            <person name="Aturaliya R.N."/>
            <person name="Bailey T.L."/>
            <person name="Bansal M."/>
            <person name="Baxter L."/>
            <person name="Beisel K.W."/>
            <person name="Bersano T."/>
            <person name="Bono H."/>
            <person name="Chalk A.M."/>
            <person name="Chiu K.P."/>
            <person name="Choudhary V."/>
            <person name="Christoffels A."/>
            <person name="Clutterbuck D.R."/>
            <person name="Crowe M.L."/>
            <person name="Dalla E."/>
            <person name="Dalrymple B.P."/>
            <person name="de Bono B."/>
            <person name="Della Gatta G."/>
            <person name="di Bernardo D."/>
            <person name="Down T."/>
            <person name="Engstrom P."/>
            <person name="Fagiolini M."/>
            <person name="Faulkner G."/>
            <person name="Fletcher C.F."/>
            <person name="Fukushima T."/>
            <person name="Furuno M."/>
            <person name="Futaki S."/>
            <person name="Gariboldi M."/>
            <person name="Georgii-Hemming P."/>
            <person name="Gingeras T.R."/>
            <person name="Gojobori T."/>
            <person name="Green R.E."/>
            <person name="Gustincich S."/>
            <person name="Harbers M."/>
            <person name="Hayashi Y."/>
            <person name="Hensch T.K."/>
            <person name="Hirokawa N."/>
            <person name="Hill D."/>
            <person name="Huminiecki L."/>
            <person name="Iacono M."/>
            <person name="Ikeo K."/>
            <person name="Iwama A."/>
            <person name="Ishikawa T."/>
            <person name="Jakt M."/>
            <person name="Kanapin A."/>
            <person name="Katoh M."/>
            <person name="Kawasawa Y."/>
            <person name="Kelso J."/>
            <person name="Kitamura H."/>
            <person name="Kitano H."/>
            <person name="Kollias G."/>
            <person name="Krishnan S.P."/>
            <person name="Kruger A."/>
            <person name="Kummerfeld S.K."/>
            <person name="Kurochkin I.V."/>
            <person name="Lareau L.F."/>
            <person name="Lazarevic D."/>
            <person name="Lipovich L."/>
            <person name="Liu J."/>
            <person name="Liuni S."/>
            <person name="McWilliam S."/>
            <person name="Madan Babu M."/>
            <person name="Madera M."/>
            <person name="Marchionni L."/>
            <person name="Matsuda H."/>
            <person name="Matsuzawa S."/>
            <person name="Miki H."/>
            <person name="Mignone F."/>
            <person name="Miyake S."/>
            <person name="Morris K."/>
            <person name="Mottagui-Tabar S."/>
            <person name="Mulder N."/>
            <person name="Nakano N."/>
            <person name="Nakauchi H."/>
            <person name="Ng P."/>
            <person name="Nilsson R."/>
            <person name="Nishiguchi S."/>
            <person name="Nishikawa S."/>
            <person name="Nori F."/>
            <person name="Ohara O."/>
            <person name="Okazaki Y."/>
            <person name="Orlando V."/>
            <person name="Pang K.C."/>
            <person name="Pavan W.J."/>
            <person name="Pavesi G."/>
            <person name="Pesole G."/>
            <person name="Petrovsky N."/>
            <person name="Piazza S."/>
            <person name="Reed J."/>
            <person name="Reid J.F."/>
            <person name="Ring B.Z."/>
            <person name="Ringwald M."/>
            <person name="Rost B."/>
            <person name="Ruan Y."/>
            <person name="Salzberg S.L."/>
            <person name="Sandelin A."/>
            <person name="Schneider C."/>
            <person name="Schoenbach C."/>
            <person name="Sekiguchi K."/>
            <person name="Semple C.A."/>
            <person name="Seno S."/>
            <person name="Sessa L."/>
            <person name="Sheng Y."/>
            <person name="Shibata Y."/>
            <person name="Shimada H."/>
            <person name="Shimada K."/>
            <person name="Silva D."/>
            <person name="Sinclair B."/>
            <person name="Sperling S."/>
            <person name="Stupka E."/>
            <person name="Sugiura K."/>
            <person name="Sultana R."/>
            <person name="Takenaka Y."/>
            <person name="Taki K."/>
            <person name="Tammoja K."/>
            <person name="Tan S.L."/>
            <person name="Tang S."/>
            <person name="Taylor M.S."/>
            <person name="Tegner J."/>
            <person name="Teichmann S.A."/>
            <person name="Ueda H.R."/>
            <person name="van Nimwegen E."/>
            <person name="Verardo R."/>
            <person name="Wei C.L."/>
            <person name="Yagi K."/>
            <person name="Yamanishi H."/>
            <person name="Zabarovsky E."/>
            <person name="Zhu S."/>
            <person name="Zimmer A."/>
            <person name="Hide W."/>
            <person name="Bult C."/>
            <person name="Grimmond S.M."/>
            <person name="Teasdale R.D."/>
            <person name="Liu E.T."/>
            <person name="Brusic V."/>
            <person name="Quackenbush J."/>
            <person name="Wahlestedt C."/>
            <person name="Mattick J.S."/>
            <person name="Hume D.A."/>
            <person name="Kai C."/>
            <person name="Sasaki D."/>
            <person name="Tomaru Y."/>
            <person name="Fukuda S."/>
            <person name="Kanamori-Katayama M."/>
            <person name="Suzuki M."/>
            <person name="Aoki J."/>
            <person name="Arakawa T."/>
            <person name="Iida J."/>
            <person name="Imamura K."/>
            <person name="Itoh M."/>
            <person name="Kato T."/>
            <person name="Kawaji H."/>
            <person name="Kawagashira N."/>
            <person name="Kawashima T."/>
            <person name="Kojima M."/>
            <person name="Kondo S."/>
            <person name="Konno H."/>
            <person name="Nakano K."/>
            <person name="Ninomiya N."/>
            <person name="Nishio T."/>
            <person name="Okada M."/>
            <person name="Plessy C."/>
            <person name="Shibata K."/>
            <person name="Shiraki T."/>
            <person name="Suzuki S."/>
            <person name="Tagami M."/>
            <person name="Waki K."/>
            <person name="Watahiki A."/>
            <person name="Okamura-Oho Y."/>
            <person name="Suzuki H."/>
            <person name="Kawai J."/>
            <person name="Hayashizaki Y."/>
        </authorList>
    </citation>
    <scope>NUCLEOTIDE SEQUENCE [LARGE SCALE MRNA] (ISOFORM 3)</scope>
    <source>
        <strain>C57BL/6J</strain>
        <tissue>Testis</tissue>
    </source>
</reference>
<reference key="3">
    <citation type="journal article" date="2009" name="PLoS Biol.">
        <title>Lineage-specific biology revealed by a finished genome assembly of the mouse.</title>
        <authorList>
            <person name="Church D.M."/>
            <person name="Goodstadt L."/>
            <person name="Hillier L.W."/>
            <person name="Zody M.C."/>
            <person name="Goldstein S."/>
            <person name="She X."/>
            <person name="Bult C.J."/>
            <person name="Agarwala R."/>
            <person name="Cherry J.L."/>
            <person name="DiCuccio M."/>
            <person name="Hlavina W."/>
            <person name="Kapustin Y."/>
            <person name="Meric P."/>
            <person name="Maglott D."/>
            <person name="Birtle Z."/>
            <person name="Marques A.C."/>
            <person name="Graves T."/>
            <person name="Zhou S."/>
            <person name="Teague B."/>
            <person name="Potamousis K."/>
            <person name="Churas C."/>
            <person name="Place M."/>
            <person name="Herschleb J."/>
            <person name="Runnheim R."/>
            <person name="Forrest D."/>
            <person name="Amos-Landgraf J."/>
            <person name="Schwartz D.C."/>
            <person name="Cheng Z."/>
            <person name="Lindblad-Toh K."/>
            <person name="Eichler E.E."/>
            <person name="Ponting C.P."/>
        </authorList>
    </citation>
    <scope>NUCLEOTIDE SEQUENCE [LARGE SCALE GENOMIC DNA]</scope>
    <source>
        <strain>C57BL/6J</strain>
    </source>
</reference>
<reference key="4">
    <citation type="journal article" date="1992" name="Cell Biochem. Funct.">
        <title>In situ localization of male germ cell-associated kinase (mak) mRNA in adult mouse testis: specific expression in germ cells at stages around meiotic cell division.</title>
        <authorList>
            <person name="Koji T."/>
            <person name="Jinno A."/>
            <person name="Matsushime H."/>
            <person name="Shibuya M."/>
            <person name="Nakane P.K."/>
        </authorList>
    </citation>
    <scope>DEVELOPMENTAL STAGE</scope>
</reference>
<reference key="5">
    <citation type="journal article" date="2002" name="Mol. Cell. Biol.">
        <title>A testicular germ cell-associated serine-threonine kinase, MAK, is dispensable for sperm formation.</title>
        <authorList>
            <person name="Shinkai Y."/>
            <person name="Satoh H."/>
            <person name="Takeda N."/>
            <person name="Fukuda M."/>
            <person name="Chiba E."/>
            <person name="Kato T."/>
            <person name="Kuramochi T."/>
            <person name="Araki Y."/>
        </authorList>
    </citation>
    <scope>DISRUPTION PHENOTYPE</scope>
</reference>
<reference key="6">
    <citation type="journal article" date="2010" name="Proc. Natl. Acad. Sci. U.S.A.">
        <title>Negative regulation of ciliary length by ciliary male germ cell-associated kinase (Mak) is required for retinal photoreceptor survival.</title>
        <authorList>
            <person name="Omori Y."/>
            <person name="Chaya T."/>
            <person name="Katoh K."/>
            <person name="Kajimura N."/>
            <person name="Sato S."/>
            <person name="Muraoka K."/>
            <person name="Ueno S."/>
            <person name="Koyasu T."/>
            <person name="Kondo M."/>
            <person name="Furukawa T."/>
        </authorList>
    </citation>
    <scope>FUNCTION</scope>
    <scope>SUBCELLULAR LOCATION</scope>
    <scope>INTERACTION WITH RP1</scope>
    <scope>TISSUE SPECIFICITY</scope>
</reference>
<feature type="chain" id="PRO_0000086285" description="Serine/threonine-protein kinase MAK">
    <location>
        <begin position="1"/>
        <end position="622"/>
    </location>
</feature>
<feature type="domain" description="Protein kinase" evidence="3">
    <location>
        <begin position="4"/>
        <end position="284"/>
    </location>
</feature>
<feature type="region of interest" description="Disordered" evidence="5">
    <location>
        <begin position="301"/>
        <end position="371"/>
    </location>
</feature>
<feature type="compositionally biased region" description="Polar residues" evidence="5">
    <location>
        <begin position="336"/>
        <end position="355"/>
    </location>
</feature>
<feature type="active site" description="Proton acceptor" evidence="3 4">
    <location>
        <position position="125"/>
    </location>
</feature>
<feature type="binding site" evidence="3">
    <location>
        <begin position="10"/>
        <end position="18"/>
    </location>
    <ligand>
        <name>ATP</name>
        <dbReference type="ChEBI" id="CHEBI:30616"/>
    </ligand>
</feature>
<feature type="binding site" evidence="3">
    <location>
        <position position="33"/>
    </location>
    <ligand>
        <name>ATP</name>
        <dbReference type="ChEBI" id="CHEBI:30616"/>
    </ligand>
</feature>
<feature type="modified residue" description="Phosphothreonine; by autocatalysis" evidence="2">
    <location>
        <position position="157"/>
    </location>
</feature>
<feature type="modified residue" description="Phosphotyrosine; by autocatalysis" evidence="2">
    <location>
        <position position="159"/>
    </location>
</feature>
<feature type="splice variant" id="VSP_042472" description="In isoform 3." evidence="9">
    <location>
        <begin position="94"/>
        <end position="124"/>
    </location>
</feature>
<feature type="splice variant" id="VSP_042473" description="In isoform 3." evidence="9">
    <location>
        <begin position="531"/>
        <end position="571"/>
    </location>
</feature>
<feature type="splice variant" id="VSP_042474" description="In isoform 2." evidence="10">
    <original>A</original>
    <variation>EDSIIKPIENLSCTGKSAEQLEDPQ</variation>
    <location>
        <position position="531"/>
    </location>
</feature>
<feature type="sequence conflict" description="In Ref. 2; BAC26662." evidence="10" ref="2">
    <original>P</original>
    <variation>H</variation>
    <location>
        <position position="128"/>
    </location>
</feature>
<feature type="sequence conflict" description="In Ref. 2; BAC26662." evidence="10" ref="2">
    <original>N</original>
    <variation>D</variation>
    <location>
        <position position="235"/>
    </location>
</feature>
<feature type="sequence conflict" description="In Ref. 1; CAA47392." evidence="10" ref="1">
    <original>T</original>
    <variation>A</variation>
    <location>
        <position position="386"/>
    </location>
</feature>
<name>MAK_MOUSE</name>
<gene>
    <name type="primary">Mak</name>
    <name type="synonym">Rck</name>
</gene>